<evidence type="ECO:0000255" key="1">
    <source>
        <dbReference type="HAMAP-Rule" id="MF_00374"/>
    </source>
</evidence>
<evidence type="ECO:0000305" key="2"/>
<protein>
    <recommendedName>
        <fullName evidence="1">Large ribosomal subunit protein uL29</fullName>
    </recommendedName>
    <alternativeName>
        <fullName evidence="2">50S ribosomal protein L29</fullName>
    </alternativeName>
</protein>
<proteinExistence type="inferred from homology"/>
<name>RL29_STRPJ</name>
<organism>
    <name type="scientific">Streptococcus pneumoniae (strain ATCC 700669 / Spain 23F-1)</name>
    <dbReference type="NCBI Taxonomy" id="561276"/>
    <lineage>
        <taxon>Bacteria</taxon>
        <taxon>Bacillati</taxon>
        <taxon>Bacillota</taxon>
        <taxon>Bacilli</taxon>
        <taxon>Lactobacillales</taxon>
        <taxon>Streptococcaceae</taxon>
        <taxon>Streptococcus</taxon>
    </lineage>
</organism>
<accession>B8ZKG5</accession>
<comment type="similarity">
    <text evidence="1">Belongs to the universal ribosomal protein uL29 family.</text>
</comment>
<feature type="chain" id="PRO_1000194035" description="Large ribosomal subunit protein uL29">
    <location>
        <begin position="1"/>
        <end position="68"/>
    </location>
</feature>
<keyword id="KW-0687">Ribonucleoprotein</keyword>
<keyword id="KW-0689">Ribosomal protein</keyword>
<dbReference type="EMBL" id="FM211187">
    <property type="protein sequence ID" value="CAR68067.1"/>
    <property type="molecule type" value="Genomic_DNA"/>
</dbReference>
<dbReference type="RefSeq" id="WP_000772918.1">
    <property type="nucleotide sequence ID" value="NC_011900.1"/>
</dbReference>
<dbReference type="SMR" id="B8ZKG5"/>
<dbReference type="GeneID" id="93738965"/>
<dbReference type="KEGG" id="sne:SPN23F02070"/>
<dbReference type="HOGENOM" id="CLU_158491_5_2_9"/>
<dbReference type="GO" id="GO:0022625">
    <property type="term" value="C:cytosolic large ribosomal subunit"/>
    <property type="evidence" value="ECO:0007669"/>
    <property type="project" value="TreeGrafter"/>
</dbReference>
<dbReference type="GO" id="GO:0003735">
    <property type="term" value="F:structural constituent of ribosome"/>
    <property type="evidence" value="ECO:0007669"/>
    <property type="project" value="InterPro"/>
</dbReference>
<dbReference type="GO" id="GO:0006412">
    <property type="term" value="P:translation"/>
    <property type="evidence" value="ECO:0007669"/>
    <property type="project" value="UniProtKB-UniRule"/>
</dbReference>
<dbReference type="CDD" id="cd00427">
    <property type="entry name" value="Ribosomal_L29_HIP"/>
    <property type="match status" value="1"/>
</dbReference>
<dbReference type="FunFam" id="1.10.287.310:FF:000001">
    <property type="entry name" value="50S ribosomal protein L29"/>
    <property type="match status" value="1"/>
</dbReference>
<dbReference type="Gene3D" id="1.10.287.310">
    <property type="match status" value="1"/>
</dbReference>
<dbReference type="HAMAP" id="MF_00374">
    <property type="entry name" value="Ribosomal_uL29"/>
    <property type="match status" value="1"/>
</dbReference>
<dbReference type="InterPro" id="IPR050063">
    <property type="entry name" value="Ribosomal_protein_uL29"/>
</dbReference>
<dbReference type="InterPro" id="IPR001854">
    <property type="entry name" value="Ribosomal_uL29"/>
</dbReference>
<dbReference type="InterPro" id="IPR018254">
    <property type="entry name" value="Ribosomal_uL29_CS"/>
</dbReference>
<dbReference type="InterPro" id="IPR036049">
    <property type="entry name" value="Ribosomal_uL29_sf"/>
</dbReference>
<dbReference type="NCBIfam" id="TIGR00012">
    <property type="entry name" value="L29"/>
    <property type="match status" value="1"/>
</dbReference>
<dbReference type="PANTHER" id="PTHR10916">
    <property type="entry name" value="60S RIBOSOMAL PROTEIN L35/50S RIBOSOMAL PROTEIN L29"/>
    <property type="match status" value="1"/>
</dbReference>
<dbReference type="PANTHER" id="PTHR10916:SF0">
    <property type="entry name" value="LARGE RIBOSOMAL SUBUNIT PROTEIN UL29C"/>
    <property type="match status" value="1"/>
</dbReference>
<dbReference type="Pfam" id="PF00831">
    <property type="entry name" value="Ribosomal_L29"/>
    <property type="match status" value="1"/>
</dbReference>
<dbReference type="SUPFAM" id="SSF46561">
    <property type="entry name" value="Ribosomal protein L29 (L29p)"/>
    <property type="match status" value="1"/>
</dbReference>
<dbReference type="PROSITE" id="PS00579">
    <property type="entry name" value="RIBOSOMAL_L29"/>
    <property type="match status" value="1"/>
</dbReference>
<sequence length="68" mass="7987">MKLNEVKEFVKELRGLSQEELAKRENELKKELFELRFQAATGQLEQTARLKEVKKQIARIKTVQSEAK</sequence>
<reference key="1">
    <citation type="journal article" date="2009" name="J. Bacteriol.">
        <title>Role of conjugative elements in the evolution of the multidrug-resistant pandemic clone Streptococcus pneumoniae Spain23F ST81.</title>
        <authorList>
            <person name="Croucher N.J."/>
            <person name="Walker D."/>
            <person name="Romero P."/>
            <person name="Lennard N."/>
            <person name="Paterson G.K."/>
            <person name="Bason N.C."/>
            <person name="Mitchell A.M."/>
            <person name="Quail M.A."/>
            <person name="Andrew P.W."/>
            <person name="Parkhill J."/>
            <person name="Bentley S.D."/>
            <person name="Mitchell T.J."/>
        </authorList>
    </citation>
    <scope>NUCLEOTIDE SEQUENCE [LARGE SCALE GENOMIC DNA]</scope>
    <source>
        <strain>ATCC 700669 / Spain 23F-1</strain>
    </source>
</reference>
<gene>
    <name evidence="1" type="primary">rpmC</name>
    <name type="ordered locus">SPN23F02070</name>
</gene>